<comment type="function">
    <text evidence="2">Mitochondrial trifunctional enzyme catalyzes the last three of the four reactions of the mitochondrial beta-oxidation pathway. The mitochondrial beta-oxidation pathway is the major energy-producing process in tissues and is performed through four consecutive reactions breaking down fatty acids into acetyl-CoA. Among the enzymes involved in this pathway, the trifunctional enzyme exhibits specificity for long-chain fatty acids. Mitochondrial trifunctional enzyme is a heterotetrameric complex composed of two proteins, the trifunctional enzyme subunit alpha/HADHA carries the 2,3-enoyl-CoA hydratase and the 3-hydroxyacyl-CoA dehydrogenase activities, while the trifunctional enzyme subunit beta/HADHB described here bears the 3-ketoacyl-CoA thiolase activity.</text>
</comment>
<comment type="catalytic activity">
    <reaction evidence="2">
        <text>an acyl-CoA + acetyl-CoA = a 3-oxoacyl-CoA + CoA</text>
        <dbReference type="Rhea" id="RHEA:21564"/>
        <dbReference type="ChEBI" id="CHEBI:57287"/>
        <dbReference type="ChEBI" id="CHEBI:57288"/>
        <dbReference type="ChEBI" id="CHEBI:58342"/>
        <dbReference type="ChEBI" id="CHEBI:90726"/>
        <dbReference type="EC" id="2.3.1.16"/>
    </reaction>
    <physiologicalReaction direction="right-to-left" evidence="2">
        <dbReference type="Rhea" id="RHEA:21566"/>
    </physiologicalReaction>
</comment>
<comment type="catalytic activity">
    <reaction evidence="2">
        <text>butanoyl-CoA + acetyl-CoA = 3-oxohexanoyl-CoA + CoA</text>
        <dbReference type="Rhea" id="RHEA:31111"/>
        <dbReference type="ChEBI" id="CHEBI:57287"/>
        <dbReference type="ChEBI" id="CHEBI:57288"/>
        <dbReference type="ChEBI" id="CHEBI:57371"/>
        <dbReference type="ChEBI" id="CHEBI:62418"/>
    </reaction>
    <physiologicalReaction direction="right-to-left" evidence="2">
        <dbReference type="Rhea" id="RHEA:31113"/>
    </physiologicalReaction>
</comment>
<comment type="catalytic activity">
    <reaction evidence="2">
        <text>hexanoyl-CoA + acetyl-CoA = 3-oxooctanoyl-CoA + CoA</text>
        <dbReference type="Rhea" id="RHEA:31203"/>
        <dbReference type="ChEBI" id="CHEBI:57287"/>
        <dbReference type="ChEBI" id="CHEBI:57288"/>
        <dbReference type="ChEBI" id="CHEBI:62619"/>
        <dbReference type="ChEBI" id="CHEBI:62620"/>
    </reaction>
    <physiologicalReaction direction="right-to-left" evidence="2">
        <dbReference type="Rhea" id="RHEA:31205"/>
    </physiologicalReaction>
</comment>
<comment type="catalytic activity">
    <reaction evidence="2">
        <text>octanoyl-CoA + acetyl-CoA = 3-oxodecanoyl-CoA + CoA</text>
        <dbReference type="Rhea" id="RHEA:31087"/>
        <dbReference type="ChEBI" id="CHEBI:57287"/>
        <dbReference type="ChEBI" id="CHEBI:57288"/>
        <dbReference type="ChEBI" id="CHEBI:57386"/>
        <dbReference type="ChEBI" id="CHEBI:62548"/>
    </reaction>
    <physiologicalReaction direction="right-to-left" evidence="2">
        <dbReference type="Rhea" id="RHEA:31089"/>
    </physiologicalReaction>
</comment>
<comment type="catalytic activity">
    <reaction evidence="2">
        <text>decanoyl-CoA + acetyl-CoA = 3-oxododecanoyl-CoA + CoA</text>
        <dbReference type="Rhea" id="RHEA:31183"/>
        <dbReference type="ChEBI" id="CHEBI:57287"/>
        <dbReference type="ChEBI" id="CHEBI:57288"/>
        <dbReference type="ChEBI" id="CHEBI:61430"/>
        <dbReference type="ChEBI" id="CHEBI:62615"/>
    </reaction>
    <physiologicalReaction direction="right-to-left" evidence="2">
        <dbReference type="Rhea" id="RHEA:31185"/>
    </physiologicalReaction>
</comment>
<comment type="catalytic activity">
    <reaction evidence="2">
        <text>dodecanoyl-CoA + acetyl-CoA = 3-oxotetradecanoyl-CoA + CoA</text>
        <dbReference type="Rhea" id="RHEA:31091"/>
        <dbReference type="ChEBI" id="CHEBI:57287"/>
        <dbReference type="ChEBI" id="CHEBI:57288"/>
        <dbReference type="ChEBI" id="CHEBI:57375"/>
        <dbReference type="ChEBI" id="CHEBI:62543"/>
    </reaction>
    <physiologicalReaction direction="right-to-left" evidence="2">
        <dbReference type="Rhea" id="RHEA:31093"/>
    </physiologicalReaction>
</comment>
<comment type="catalytic activity">
    <reaction evidence="2">
        <text>tetradecanoyl-CoA + acetyl-CoA = 3-oxohexadecanoyl-CoA + CoA</text>
        <dbReference type="Rhea" id="RHEA:18161"/>
        <dbReference type="ChEBI" id="CHEBI:57287"/>
        <dbReference type="ChEBI" id="CHEBI:57288"/>
        <dbReference type="ChEBI" id="CHEBI:57349"/>
        <dbReference type="ChEBI" id="CHEBI:57385"/>
        <dbReference type="EC" id="2.3.1.155"/>
    </reaction>
    <physiologicalReaction direction="right-to-left" evidence="2">
        <dbReference type="Rhea" id="RHEA:18163"/>
    </physiologicalReaction>
</comment>
<comment type="pathway">
    <text evidence="2">Lipid metabolism; fatty acid beta-oxidation.</text>
</comment>
<comment type="subunit">
    <text evidence="2 3">Heterotetramer of 2 alpha/HADHA and 2 beta/HADHB subunits; forms the mitochondrial trifunctional enzyme (By similarity). Also purified as higher order heterooligomers including a 4 alpha/HADHA and 4 beta/HADHB heterooligomer which physiological significance remains unclear (By similarity). The mitochondrial trifunctional enzyme interacts with MTLN (PubMed:29949755). Interacts with RSAD2/viperin (By similarity).</text>
</comment>
<comment type="subcellular location">
    <subcellularLocation>
        <location evidence="2">Mitochondrion</location>
    </subcellularLocation>
    <subcellularLocation>
        <location evidence="2">Mitochondrion inner membrane</location>
    </subcellularLocation>
    <subcellularLocation>
        <location evidence="2">Mitochondrion outer membrane</location>
    </subcellularLocation>
    <subcellularLocation>
        <location evidence="2">Endoplasmic reticulum</location>
    </subcellularLocation>
    <text evidence="2">Protein stability and association with membranes require HADHA.</text>
</comment>
<comment type="PTM">
    <text>Acetylation of Lys-202 is observed in liver mitochondria from fasted mice but not from fed mice.</text>
</comment>
<comment type="similarity">
    <text evidence="4">Belongs to the thiolase-like superfamily. Thiolase family.</text>
</comment>
<evidence type="ECO:0000250" key="1"/>
<evidence type="ECO:0000250" key="2">
    <source>
        <dbReference type="UniProtKB" id="P55084"/>
    </source>
</evidence>
<evidence type="ECO:0000269" key="3">
    <source>
    </source>
</evidence>
<evidence type="ECO:0000305" key="4"/>
<evidence type="ECO:0007744" key="5">
    <source>
    </source>
</evidence>
<evidence type="ECO:0007744" key="6">
    <source>
    </source>
</evidence>
<name>ECHB_MOUSE</name>
<gene>
    <name type="primary">Hadhb</name>
</gene>
<protein>
    <recommendedName>
        <fullName>Trifunctional enzyme subunit beta, mitochondrial</fullName>
    </recommendedName>
    <alternativeName>
        <fullName>TP-beta</fullName>
    </alternativeName>
    <domain>
        <recommendedName>
            <fullName>3-ketoacyl-CoA thiolase</fullName>
            <ecNumber evidence="2">2.3.1.155</ecNumber>
            <ecNumber evidence="2">2.3.1.16</ecNumber>
        </recommendedName>
        <alternativeName>
            <fullName>Acetyl-CoA acyltransferase</fullName>
        </alternativeName>
        <alternativeName>
            <fullName>Beta-ketothiolase</fullName>
        </alternativeName>
    </domain>
</protein>
<keyword id="KW-0007">Acetylation</keyword>
<keyword id="KW-0012">Acyltransferase</keyword>
<keyword id="KW-0256">Endoplasmic reticulum</keyword>
<keyword id="KW-0276">Fatty acid metabolism</keyword>
<keyword id="KW-0443">Lipid metabolism</keyword>
<keyword id="KW-0472">Membrane</keyword>
<keyword id="KW-0496">Mitochondrion</keyword>
<keyword id="KW-0999">Mitochondrion inner membrane</keyword>
<keyword id="KW-1000">Mitochondrion outer membrane</keyword>
<keyword id="KW-1185">Reference proteome</keyword>
<keyword id="KW-0808">Transferase</keyword>
<keyword id="KW-0809">Transit peptide</keyword>
<organism>
    <name type="scientific">Mus musculus</name>
    <name type="common">Mouse</name>
    <dbReference type="NCBI Taxonomy" id="10090"/>
    <lineage>
        <taxon>Eukaryota</taxon>
        <taxon>Metazoa</taxon>
        <taxon>Chordata</taxon>
        <taxon>Craniata</taxon>
        <taxon>Vertebrata</taxon>
        <taxon>Euteleostomi</taxon>
        <taxon>Mammalia</taxon>
        <taxon>Eutheria</taxon>
        <taxon>Euarchontoglires</taxon>
        <taxon>Glires</taxon>
        <taxon>Rodentia</taxon>
        <taxon>Myomorpha</taxon>
        <taxon>Muroidea</taxon>
        <taxon>Muridae</taxon>
        <taxon>Murinae</taxon>
        <taxon>Mus</taxon>
        <taxon>Mus</taxon>
    </lineage>
</organism>
<feature type="transit peptide" description="Mitochondrion" evidence="1">
    <location>
        <begin position="1"/>
        <end position="34"/>
    </location>
</feature>
<feature type="chain" id="PRO_0000034082" description="Trifunctional enzyme subunit beta, mitochondrial">
    <location>
        <begin position="35"/>
        <end position="475"/>
    </location>
</feature>
<feature type="intramembrane region" evidence="2">
    <location>
        <begin position="174"/>
        <end position="221"/>
    </location>
</feature>
<feature type="active site" description="Acyl-thioester intermediate" evidence="2">
    <location>
        <position position="139"/>
    </location>
</feature>
<feature type="active site" description="Proton donor/acceptor" evidence="2">
    <location>
        <position position="459"/>
    </location>
</feature>
<feature type="site" description="Increases nucleophilicity of active site Cys" evidence="2">
    <location>
        <position position="429"/>
    </location>
</feature>
<feature type="modified residue" description="N6-succinyllysine" evidence="6">
    <location>
        <position position="53"/>
    </location>
</feature>
<feature type="modified residue" description="N6-acetyllysine; alternate" evidence="5">
    <location>
        <position position="73"/>
    </location>
</feature>
<feature type="modified residue" description="N6-succinyllysine; alternate" evidence="6">
    <location>
        <position position="73"/>
    </location>
</feature>
<feature type="modified residue" description="N6-acetyllysine; alternate" evidence="5">
    <location>
        <position position="189"/>
    </location>
</feature>
<feature type="modified residue" description="N6-succinyllysine; alternate" evidence="6">
    <location>
        <position position="189"/>
    </location>
</feature>
<feature type="modified residue" description="N6-succinyllysine" evidence="6">
    <location>
        <position position="191"/>
    </location>
</feature>
<feature type="modified residue" description="N6-succinyllysine" evidence="6">
    <location>
        <position position="273"/>
    </location>
</feature>
<feature type="modified residue" description="N6-succinyllysine" evidence="6">
    <location>
        <position position="292"/>
    </location>
</feature>
<feature type="modified residue" description="N6-acetyllysine; alternate" evidence="5">
    <location>
        <position position="294"/>
    </location>
</feature>
<feature type="modified residue" description="N6-succinyllysine; alternate" evidence="6">
    <location>
        <position position="294"/>
    </location>
</feature>
<feature type="modified residue" description="N6-acetyllysine" evidence="5">
    <location>
        <position position="299"/>
    </location>
</feature>
<feature type="modified residue" description="N6-acetyllysine; alternate" evidence="5">
    <location>
        <position position="333"/>
    </location>
</feature>
<feature type="modified residue" description="N6-succinyllysine; alternate" evidence="6">
    <location>
        <position position="333"/>
    </location>
</feature>
<feature type="modified residue" description="N6-acetyllysine" evidence="5">
    <location>
        <position position="349"/>
    </location>
</feature>
<feature type="modified residue" description="N6-acetyllysine" evidence="5">
    <location>
        <position position="362"/>
    </location>
</feature>
<feature type="sequence conflict" description="In Ref. 1; BAC36493." evidence="4" ref="1">
    <original>IR</original>
    <variation>HK</variation>
    <location>
        <begin position="24"/>
        <end position="25"/>
    </location>
</feature>
<feature type="sequence conflict" description="In Ref. 1; BAC38790." evidence="4" ref="1">
    <original>L</original>
    <variation>M</variation>
    <location>
        <position position="425"/>
    </location>
</feature>
<feature type="sequence conflict" description="In Ref. 1; BAC38790." evidence="4" ref="1">
    <original>G</original>
    <variation>R</variation>
    <location>
        <position position="450"/>
    </location>
</feature>
<feature type="sequence conflict" description="In Ref. 1; BAC39015." evidence="4" ref="1">
    <original>G</original>
    <variation>V</variation>
    <location>
        <position position="450"/>
    </location>
</feature>
<dbReference type="EC" id="2.3.1.155" evidence="2"/>
<dbReference type="EC" id="2.3.1.16" evidence="2"/>
<dbReference type="EMBL" id="AK033462">
    <property type="protein sequence ID" value="BAC28300.1"/>
    <property type="molecule type" value="mRNA"/>
</dbReference>
<dbReference type="EMBL" id="AK076814">
    <property type="protein sequence ID" value="BAC36493.1"/>
    <property type="molecule type" value="mRNA"/>
</dbReference>
<dbReference type="EMBL" id="AK083164">
    <property type="protein sequence ID" value="BAC38790.1"/>
    <property type="molecule type" value="mRNA"/>
</dbReference>
<dbReference type="EMBL" id="AK083767">
    <property type="protein sequence ID" value="BAC39015.1"/>
    <property type="molecule type" value="mRNA"/>
</dbReference>
<dbReference type="EMBL" id="AK150889">
    <property type="protein sequence ID" value="BAE29936.1"/>
    <property type="molecule type" value="mRNA"/>
</dbReference>
<dbReference type="EMBL" id="AK169637">
    <property type="protein sequence ID" value="BAE41269.1"/>
    <property type="molecule type" value="mRNA"/>
</dbReference>
<dbReference type="EMBL" id="BC005585">
    <property type="protein sequence ID" value="AAH05585.1"/>
    <property type="molecule type" value="mRNA"/>
</dbReference>
<dbReference type="CCDS" id="CCDS39045.1"/>
<dbReference type="RefSeq" id="NP_001276727.1">
    <property type="nucleotide sequence ID" value="NM_001289798.1"/>
</dbReference>
<dbReference type="RefSeq" id="NP_001276728.1">
    <property type="nucleotide sequence ID" value="NM_001289799.1"/>
</dbReference>
<dbReference type="RefSeq" id="NP_663533.1">
    <property type="nucleotide sequence ID" value="NM_145558.2"/>
</dbReference>
<dbReference type="RefSeq" id="XP_017176317.1">
    <property type="nucleotide sequence ID" value="XM_017320828.1"/>
</dbReference>
<dbReference type="RefSeq" id="XP_017176318.1">
    <property type="nucleotide sequence ID" value="XM_017320829.3"/>
</dbReference>
<dbReference type="RefSeq" id="XP_036020906.1">
    <property type="nucleotide sequence ID" value="XM_036165013.1"/>
</dbReference>
<dbReference type="SMR" id="Q99JY0"/>
<dbReference type="BioGRID" id="231080">
    <property type="interactions" value="45"/>
</dbReference>
<dbReference type="FunCoup" id="Q99JY0">
    <property type="interactions" value="1657"/>
</dbReference>
<dbReference type="IntAct" id="Q99JY0">
    <property type="interactions" value="7"/>
</dbReference>
<dbReference type="MINT" id="Q99JY0"/>
<dbReference type="STRING" id="10090.ENSMUSP00000110434"/>
<dbReference type="GlyGen" id="Q99JY0">
    <property type="glycosylation" value="1 site, 1 O-linked glycan (1 site)"/>
</dbReference>
<dbReference type="iPTMnet" id="Q99JY0"/>
<dbReference type="MetOSite" id="Q99JY0"/>
<dbReference type="PhosphoSitePlus" id="Q99JY0"/>
<dbReference type="SwissPalm" id="Q99JY0"/>
<dbReference type="jPOST" id="Q99JY0"/>
<dbReference type="PaxDb" id="10090-ENSMUSP00000110434"/>
<dbReference type="PeptideAtlas" id="Q99JY0"/>
<dbReference type="ProteomicsDB" id="277669"/>
<dbReference type="Pumba" id="Q99JY0"/>
<dbReference type="Antibodypedia" id="27848">
    <property type="antibodies" value="250 antibodies from 30 providers"/>
</dbReference>
<dbReference type="DNASU" id="231086"/>
<dbReference type="Ensembl" id="ENSMUST00000026841.15">
    <property type="protein sequence ID" value="ENSMUSP00000026841.9"/>
    <property type="gene ID" value="ENSMUSG00000059447.14"/>
</dbReference>
<dbReference type="Ensembl" id="ENSMUST00000114783.6">
    <property type="protein sequence ID" value="ENSMUSP00000110431.2"/>
    <property type="gene ID" value="ENSMUSG00000059447.14"/>
</dbReference>
<dbReference type="Ensembl" id="ENSMUST00000114786.8">
    <property type="protein sequence ID" value="ENSMUSP00000110434.2"/>
    <property type="gene ID" value="ENSMUSG00000059447.14"/>
</dbReference>
<dbReference type="GeneID" id="231086"/>
<dbReference type="KEGG" id="mmu:231086"/>
<dbReference type="UCSC" id="uc008wve.2">
    <property type="organism name" value="mouse"/>
</dbReference>
<dbReference type="AGR" id="MGI:2136381"/>
<dbReference type="CTD" id="3032"/>
<dbReference type="MGI" id="MGI:2136381">
    <property type="gene designation" value="Hadhb"/>
</dbReference>
<dbReference type="VEuPathDB" id="HostDB:ENSMUSG00000059447"/>
<dbReference type="eggNOG" id="KOG1392">
    <property type="taxonomic scope" value="Eukaryota"/>
</dbReference>
<dbReference type="GeneTree" id="ENSGT01030000234626"/>
<dbReference type="HOGENOM" id="CLU_031026_2_0_1"/>
<dbReference type="InParanoid" id="Q99JY0"/>
<dbReference type="OMA" id="MTAFPEP"/>
<dbReference type="OrthoDB" id="5404651at2759"/>
<dbReference type="PhylomeDB" id="Q99JY0"/>
<dbReference type="TreeFam" id="TF315243"/>
<dbReference type="Reactome" id="R-MMU-1482798">
    <property type="pathway name" value="Acyl chain remodeling of CL"/>
</dbReference>
<dbReference type="Reactome" id="R-MMU-77285">
    <property type="pathway name" value="Beta oxidation of myristoyl-CoA to lauroyl-CoA"/>
</dbReference>
<dbReference type="Reactome" id="R-MMU-77305">
    <property type="pathway name" value="Beta oxidation of palmitoyl-CoA to myristoyl-CoA"/>
</dbReference>
<dbReference type="Reactome" id="R-MMU-77310">
    <property type="pathway name" value="Beta oxidation of lauroyl-CoA to decanoyl-CoA-CoA"/>
</dbReference>
<dbReference type="Reactome" id="R-MMU-77346">
    <property type="pathway name" value="Beta oxidation of decanoyl-CoA to octanoyl-CoA-CoA"/>
</dbReference>
<dbReference type="Reactome" id="R-MMU-77348">
    <property type="pathway name" value="Beta oxidation of octanoyl-CoA to hexanoyl-CoA"/>
</dbReference>
<dbReference type="Reactome" id="R-MMU-77350">
    <property type="pathway name" value="Beta oxidation of hexanoyl-CoA to butanoyl-CoA"/>
</dbReference>
<dbReference type="UniPathway" id="UPA00659"/>
<dbReference type="BioGRID-ORCS" id="231086">
    <property type="hits" value="1 hit in 77 CRISPR screens"/>
</dbReference>
<dbReference type="CD-CODE" id="CE726F99">
    <property type="entry name" value="Postsynaptic density"/>
</dbReference>
<dbReference type="ChiTaRS" id="Hadhb">
    <property type="organism name" value="mouse"/>
</dbReference>
<dbReference type="PRO" id="PR:Q99JY0"/>
<dbReference type="Proteomes" id="UP000000589">
    <property type="component" value="Chromosome 5"/>
</dbReference>
<dbReference type="RNAct" id="Q99JY0">
    <property type="molecule type" value="protein"/>
</dbReference>
<dbReference type="Bgee" id="ENSMUSG00000059447">
    <property type="expression patterns" value="Expressed in spermatocyte and 173 other cell types or tissues"/>
</dbReference>
<dbReference type="ExpressionAtlas" id="Q99JY0">
    <property type="expression patterns" value="baseline and differential"/>
</dbReference>
<dbReference type="GO" id="GO:0005783">
    <property type="term" value="C:endoplasmic reticulum"/>
    <property type="evidence" value="ECO:0000250"/>
    <property type="project" value="UniProtKB"/>
</dbReference>
<dbReference type="GO" id="GO:0016507">
    <property type="term" value="C:mitochondrial fatty acid beta-oxidation multienzyme complex"/>
    <property type="evidence" value="ECO:0000305"/>
    <property type="project" value="MGI"/>
</dbReference>
<dbReference type="GO" id="GO:0005743">
    <property type="term" value="C:mitochondrial inner membrane"/>
    <property type="evidence" value="ECO:0007005"/>
    <property type="project" value="MGI"/>
</dbReference>
<dbReference type="GO" id="GO:0042645">
    <property type="term" value="C:mitochondrial nucleoid"/>
    <property type="evidence" value="ECO:0007669"/>
    <property type="project" value="Ensembl"/>
</dbReference>
<dbReference type="GO" id="GO:0005741">
    <property type="term" value="C:mitochondrial outer membrane"/>
    <property type="evidence" value="ECO:0000250"/>
    <property type="project" value="UniProtKB"/>
</dbReference>
<dbReference type="GO" id="GO:0005739">
    <property type="term" value="C:mitochondrion"/>
    <property type="evidence" value="ECO:0000314"/>
    <property type="project" value="MGI"/>
</dbReference>
<dbReference type="GO" id="GO:0005654">
    <property type="term" value="C:nucleoplasm"/>
    <property type="evidence" value="ECO:0007669"/>
    <property type="project" value="Ensembl"/>
</dbReference>
<dbReference type="GO" id="GO:0003985">
    <property type="term" value="F:acetyl-CoA C-acetyltransferase activity"/>
    <property type="evidence" value="ECO:0000314"/>
    <property type="project" value="MGI"/>
</dbReference>
<dbReference type="GO" id="GO:0003988">
    <property type="term" value="F:acetyl-CoA C-acyltransferase activity"/>
    <property type="evidence" value="ECO:0000314"/>
    <property type="project" value="MGI"/>
</dbReference>
<dbReference type="GO" id="GO:0050633">
    <property type="term" value="F:acetyl-CoA C-myristoyltransferase activity"/>
    <property type="evidence" value="ECO:0007669"/>
    <property type="project" value="UniProtKB-EC"/>
</dbReference>
<dbReference type="GO" id="GO:0106222">
    <property type="term" value="F:lncRNA binding"/>
    <property type="evidence" value="ECO:0000314"/>
    <property type="project" value="MGI"/>
</dbReference>
<dbReference type="GO" id="GO:0071222">
    <property type="term" value="P:cellular response to lipopolysaccharide"/>
    <property type="evidence" value="ECO:0000314"/>
    <property type="project" value="MGI"/>
</dbReference>
<dbReference type="GO" id="GO:0006635">
    <property type="term" value="P:fatty acid beta-oxidation"/>
    <property type="evidence" value="ECO:0000304"/>
    <property type="project" value="MGI"/>
</dbReference>
<dbReference type="GO" id="GO:0010467">
    <property type="term" value="P:gene expression"/>
    <property type="evidence" value="ECO:0000315"/>
    <property type="project" value="MGI"/>
</dbReference>
<dbReference type="CDD" id="cd00751">
    <property type="entry name" value="thiolase"/>
    <property type="match status" value="1"/>
</dbReference>
<dbReference type="FunFam" id="3.40.47.10:FF:000020">
    <property type="entry name" value="Putative trifunctional enzyme subunit beta mitochondrial"/>
    <property type="match status" value="1"/>
</dbReference>
<dbReference type="Gene3D" id="3.40.47.10">
    <property type="match status" value="1"/>
</dbReference>
<dbReference type="InterPro" id="IPR002155">
    <property type="entry name" value="Thiolase"/>
</dbReference>
<dbReference type="InterPro" id="IPR016039">
    <property type="entry name" value="Thiolase-like"/>
</dbReference>
<dbReference type="InterPro" id="IPR020615">
    <property type="entry name" value="Thiolase_acyl_enz_int_AS"/>
</dbReference>
<dbReference type="InterPro" id="IPR020610">
    <property type="entry name" value="Thiolase_AS"/>
</dbReference>
<dbReference type="InterPro" id="IPR020617">
    <property type="entry name" value="Thiolase_C"/>
</dbReference>
<dbReference type="InterPro" id="IPR020613">
    <property type="entry name" value="Thiolase_CS"/>
</dbReference>
<dbReference type="InterPro" id="IPR020616">
    <property type="entry name" value="Thiolase_N"/>
</dbReference>
<dbReference type="NCBIfam" id="TIGR01930">
    <property type="entry name" value="AcCoA-C-Actrans"/>
    <property type="match status" value="1"/>
</dbReference>
<dbReference type="PANTHER" id="PTHR18919">
    <property type="entry name" value="ACETYL-COA C-ACYLTRANSFERASE"/>
    <property type="match status" value="1"/>
</dbReference>
<dbReference type="PANTHER" id="PTHR18919:SF153">
    <property type="entry name" value="TRIFUNCTIONAL ENZYME SUBUNIT BETA, MITOCHONDRIAL"/>
    <property type="match status" value="1"/>
</dbReference>
<dbReference type="Pfam" id="PF02803">
    <property type="entry name" value="Thiolase_C"/>
    <property type="match status" value="1"/>
</dbReference>
<dbReference type="Pfam" id="PF00108">
    <property type="entry name" value="Thiolase_N"/>
    <property type="match status" value="1"/>
</dbReference>
<dbReference type="SUPFAM" id="SSF53901">
    <property type="entry name" value="Thiolase-like"/>
    <property type="match status" value="2"/>
</dbReference>
<dbReference type="PROSITE" id="PS00098">
    <property type="entry name" value="THIOLASE_1"/>
    <property type="match status" value="1"/>
</dbReference>
<dbReference type="PROSITE" id="PS00737">
    <property type="entry name" value="THIOLASE_2"/>
    <property type="match status" value="1"/>
</dbReference>
<dbReference type="PROSITE" id="PS00099">
    <property type="entry name" value="THIOLASE_3"/>
    <property type="match status" value="1"/>
</dbReference>
<proteinExistence type="evidence at protein level"/>
<sequence length="475" mass="51386">MTTILTSTFRNLSTTSKWALRSSIRPLSCSSQLHSAPAVQTKSKKTLAKPNMKNIVVVEGVRIPFLLSGTSYKDLMPHDLARAALSGLLHRTNIPKDVVDYIIFGTVIQEVKTSNVAREAALGAGFSDKTPAHTVTMACISSNQAMTTAVGLIASGQCDVVVAGGVELMSDVPIRHSRNMRKMMLDLNKAKTLGQRLSLLSKFRLNFLSPELPAVAEFSTNETMGHSADRLAAAFAVSRMEQDEYALRSHSLAKKAQDEGHLSDIVPFKVPGKDTVTKDNGIRPSSLEQMAKLKPAFIKPYGTVTAANSSFLTDGASAMLIMSEDRALAMGYKPKAYLRDFIYVSQDPKDQLLLGPTYATPKVLEKAGLTMNDIDAFEFHEAFSGQILANFKAMDSDWFAQNYMGRKTKVGSPPLEKFNIWGGSLSLGHPFGATGCRLVMAAANRLRKDGGQYALVAACAAGGQGHAMIVEAYPK</sequence>
<accession>Q99JY0</accession>
<accession>Q3TEH9</accession>
<accession>Q8BJI5</accession>
<accession>Q8BJM0</accession>
<accession>Q8BK52</accession>
<reference key="1">
    <citation type="journal article" date="2005" name="Science">
        <title>The transcriptional landscape of the mammalian genome.</title>
        <authorList>
            <person name="Carninci P."/>
            <person name="Kasukawa T."/>
            <person name="Katayama S."/>
            <person name="Gough J."/>
            <person name="Frith M.C."/>
            <person name="Maeda N."/>
            <person name="Oyama R."/>
            <person name="Ravasi T."/>
            <person name="Lenhard B."/>
            <person name="Wells C."/>
            <person name="Kodzius R."/>
            <person name="Shimokawa K."/>
            <person name="Bajic V.B."/>
            <person name="Brenner S.E."/>
            <person name="Batalov S."/>
            <person name="Forrest A.R."/>
            <person name="Zavolan M."/>
            <person name="Davis M.J."/>
            <person name="Wilming L.G."/>
            <person name="Aidinis V."/>
            <person name="Allen J.E."/>
            <person name="Ambesi-Impiombato A."/>
            <person name="Apweiler R."/>
            <person name="Aturaliya R.N."/>
            <person name="Bailey T.L."/>
            <person name="Bansal M."/>
            <person name="Baxter L."/>
            <person name="Beisel K.W."/>
            <person name="Bersano T."/>
            <person name="Bono H."/>
            <person name="Chalk A.M."/>
            <person name="Chiu K.P."/>
            <person name="Choudhary V."/>
            <person name="Christoffels A."/>
            <person name="Clutterbuck D.R."/>
            <person name="Crowe M.L."/>
            <person name="Dalla E."/>
            <person name="Dalrymple B.P."/>
            <person name="de Bono B."/>
            <person name="Della Gatta G."/>
            <person name="di Bernardo D."/>
            <person name="Down T."/>
            <person name="Engstrom P."/>
            <person name="Fagiolini M."/>
            <person name="Faulkner G."/>
            <person name="Fletcher C.F."/>
            <person name="Fukushima T."/>
            <person name="Furuno M."/>
            <person name="Futaki S."/>
            <person name="Gariboldi M."/>
            <person name="Georgii-Hemming P."/>
            <person name="Gingeras T.R."/>
            <person name="Gojobori T."/>
            <person name="Green R.E."/>
            <person name="Gustincich S."/>
            <person name="Harbers M."/>
            <person name="Hayashi Y."/>
            <person name="Hensch T.K."/>
            <person name="Hirokawa N."/>
            <person name="Hill D."/>
            <person name="Huminiecki L."/>
            <person name="Iacono M."/>
            <person name="Ikeo K."/>
            <person name="Iwama A."/>
            <person name="Ishikawa T."/>
            <person name="Jakt M."/>
            <person name="Kanapin A."/>
            <person name="Katoh M."/>
            <person name="Kawasawa Y."/>
            <person name="Kelso J."/>
            <person name="Kitamura H."/>
            <person name="Kitano H."/>
            <person name="Kollias G."/>
            <person name="Krishnan S.P."/>
            <person name="Kruger A."/>
            <person name="Kummerfeld S.K."/>
            <person name="Kurochkin I.V."/>
            <person name="Lareau L.F."/>
            <person name="Lazarevic D."/>
            <person name="Lipovich L."/>
            <person name="Liu J."/>
            <person name="Liuni S."/>
            <person name="McWilliam S."/>
            <person name="Madan Babu M."/>
            <person name="Madera M."/>
            <person name="Marchionni L."/>
            <person name="Matsuda H."/>
            <person name="Matsuzawa S."/>
            <person name="Miki H."/>
            <person name="Mignone F."/>
            <person name="Miyake S."/>
            <person name="Morris K."/>
            <person name="Mottagui-Tabar S."/>
            <person name="Mulder N."/>
            <person name="Nakano N."/>
            <person name="Nakauchi H."/>
            <person name="Ng P."/>
            <person name="Nilsson R."/>
            <person name="Nishiguchi S."/>
            <person name="Nishikawa S."/>
            <person name="Nori F."/>
            <person name="Ohara O."/>
            <person name="Okazaki Y."/>
            <person name="Orlando V."/>
            <person name="Pang K.C."/>
            <person name="Pavan W.J."/>
            <person name="Pavesi G."/>
            <person name="Pesole G."/>
            <person name="Petrovsky N."/>
            <person name="Piazza S."/>
            <person name="Reed J."/>
            <person name="Reid J.F."/>
            <person name="Ring B.Z."/>
            <person name="Ringwald M."/>
            <person name="Rost B."/>
            <person name="Ruan Y."/>
            <person name="Salzberg S.L."/>
            <person name="Sandelin A."/>
            <person name="Schneider C."/>
            <person name="Schoenbach C."/>
            <person name="Sekiguchi K."/>
            <person name="Semple C.A."/>
            <person name="Seno S."/>
            <person name="Sessa L."/>
            <person name="Sheng Y."/>
            <person name="Shibata Y."/>
            <person name="Shimada H."/>
            <person name="Shimada K."/>
            <person name="Silva D."/>
            <person name="Sinclair B."/>
            <person name="Sperling S."/>
            <person name="Stupka E."/>
            <person name="Sugiura K."/>
            <person name="Sultana R."/>
            <person name="Takenaka Y."/>
            <person name="Taki K."/>
            <person name="Tammoja K."/>
            <person name="Tan S.L."/>
            <person name="Tang S."/>
            <person name="Taylor M.S."/>
            <person name="Tegner J."/>
            <person name="Teichmann S.A."/>
            <person name="Ueda H.R."/>
            <person name="van Nimwegen E."/>
            <person name="Verardo R."/>
            <person name="Wei C.L."/>
            <person name="Yagi K."/>
            <person name="Yamanishi H."/>
            <person name="Zabarovsky E."/>
            <person name="Zhu S."/>
            <person name="Zimmer A."/>
            <person name="Hide W."/>
            <person name="Bult C."/>
            <person name="Grimmond S.M."/>
            <person name="Teasdale R.D."/>
            <person name="Liu E.T."/>
            <person name="Brusic V."/>
            <person name="Quackenbush J."/>
            <person name="Wahlestedt C."/>
            <person name="Mattick J.S."/>
            <person name="Hume D.A."/>
            <person name="Kai C."/>
            <person name="Sasaki D."/>
            <person name="Tomaru Y."/>
            <person name="Fukuda S."/>
            <person name="Kanamori-Katayama M."/>
            <person name="Suzuki M."/>
            <person name="Aoki J."/>
            <person name="Arakawa T."/>
            <person name="Iida J."/>
            <person name="Imamura K."/>
            <person name="Itoh M."/>
            <person name="Kato T."/>
            <person name="Kawaji H."/>
            <person name="Kawagashira N."/>
            <person name="Kawashima T."/>
            <person name="Kojima M."/>
            <person name="Kondo S."/>
            <person name="Konno H."/>
            <person name="Nakano K."/>
            <person name="Ninomiya N."/>
            <person name="Nishio T."/>
            <person name="Okada M."/>
            <person name="Plessy C."/>
            <person name="Shibata K."/>
            <person name="Shiraki T."/>
            <person name="Suzuki S."/>
            <person name="Tagami M."/>
            <person name="Waki K."/>
            <person name="Watahiki A."/>
            <person name="Okamura-Oho Y."/>
            <person name="Suzuki H."/>
            <person name="Kawai J."/>
            <person name="Hayashizaki Y."/>
        </authorList>
    </citation>
    <scope>NUCLEOTIDE SEQUENCE [LARGE SCALE MRNA]</scope>
    <source>
        <strain>C57BL/6J</strain>
        <tissue>Bone marrow</tissue>
        <tissue>Colon</tissue>
        <tissue>Hippocampus</tissue>
        <tissue>Spinal ganglion</tissue>
        <tissue>Testis</tissue>
        <tissue>Thymus</tissue>
    </source>
</reference>
<reference key="2">
    <citation type="journal article" date="2004" name="Genome Res.">
        <title>The status, quality, and expansion of the NIH full-length cDNA project: the Mammalian Gene Collection (MGC).</title>
        <authorList>
            <consortium name="The MGC Project Team"/>
        </authorList>
    </citation>
    <scope>NUCLEOTIDE SEQUENCE [LARGE SCALE MRNA]</scope>
    <source>
        <strain>FVB/N</strain>
        <tissue>Mammary tumor</tissue>
    </source>
</reference>
<reference key="3">
    <citation type="journal article" date="2010" name="Cell">
        <title>A tissue-specific atlas of mouse protein phosphorylation and expression.</title>
        <authorList>
            <person name="Huttlin E.L."/>
            <person name="Jedrychowski M.P."/>
            <person name="Elias J.E."/>
            <person name="Goswami T."/>
            <person name="Rad R."/>
            <person name="Beausoleil S.A."/>
            <person name="Villen J."/>
            <person name="Haas W."/>
            <person name="Sowa M.E."/>
            <person name="Gygi S.P."/>
        </authorList>
    </citation>
    <scope>IDENTIFICATION BY MASS SPECTROMETRY [LARGE SCALE ANALYSIS]</scope>
    <source>
        <tissue>Brain</tissue>
        <tissue>Brown adipose tissue</tissue>
        <tissue>Heart</tissue>
        <tissue>Kidney</tissue>
        <tissue>Liver</tissue>
        <tissue>Lung</tissue>
        <tissue>Pancreas</tissue>
        <tissue>Spleen</tissue>
        <tissue>Testis</tissue>
    </source>
</reference>
<reference key="4">
    <citation type="journal article" date="2013" name="Mol. Cell">
        <title>SIRT5-mediated lysine desuccinylation impacts diverse metabolic pathways.</title>
        <authorList>
            <person name="Park J."/>
            <person name="Chen Y."/>
            <person name="Tishkoff D.X."/>
            <person name="Peng C."/>
            <person name="Tan M."/>
            <person name="Dai L."/>
            <person name="Xie Z."/>
            <person name="Zhang Y."/>
            <person name="Zwaans B.M."/>
            <person name="Skinner M.E."/>
            <person name="Lombard D.B."/>
            <person name="Zhao Y."/>
        </authorList>
    </citation>
    <scope>SUCCINYLATION [LARGE SCALE ANALYSIS] AT LYS-53; LYS-73; LYS-189; LYS-191; LYS-273; LYS-292; LYS-294 AND LYS-333</scope>
    <scope>IDENTIFICATION BY MASS SPECTROMETRY [LARGE SCALE ANALYSIS]</scope>
    <source>
        <tissue>Embryonic fibroblast</tissue>
        <tissue>Liver</tissue>
    </source>
</reference>
<reference key="5">
    <citation type="journal article" date="2013" name="Proc. Natl. Acad. Sci. U.S.A.">
        <title>Label-free quantitative proteomics of the lysine acetylome in mitochondria identifies substrates of SIRT3 in metabolic pathways.</title>
        <authorList>
            <person name="Rardin M.J."/>
            <person name="Newman J.C."/>
            <person name="Held J.M."/>
            <person name="Cusack M.P."/>
            <person name="Sorensen D.J."/>
            <person name="Li B."/>
            <person name="Schilling B."/>
            <person name="Mooney S.D."/>
            <person name="Kahn C.R."/>
            <person name="Verdin E."/>
            <person name="Gibson B.W."/>
        </authorList>
    </citation>
    <scope>ACETYLATION [LARGE SCALE ANALYSIS] AT LYS-73; LYS-189; LYS-294; LYS-299; LYS-333; LYS-349 AND LYS-362</scope>
    <scope>IDENTIFICATION BY MASS SPECTROMETRY [LARGE SCALE ANALYSIS]</scope>
    <source>
        <tissue>Liver</tissue>
    </source>
</reference>
<reference key="6">
    <citation type="journal article" date="2018" name="Cell Rep.">
        <title>MOXI Is a Mitochondrial Micropeptide That Enhances Fatty Acid beta-Oxidation.</title>
        <authorList>
            <person name="Makarewich C.A."/>
            <person name="Baskin K.K."/>
            <person name="Munir A.Z."/>
            <person name="Bezprozvannaya S."/>
            <person name="Sharma G."/>
            <person name="Khemtong C."/>
            <person name="Shah A.M."/>
            <person name="McAnally J.R."/>
            <person name="Malloy C.R."/>
            <person name="Szweda L.I."/>
            <person name="Bassel-Duby R."/>
            <person name="Olson E.N."/>
        </authorList>
    </citation>
    <scope>INTERACTION WITH MTLN</scope>
</reference>